<proteinExistence type="evidence at transcript level"/>
<name>MEP33_SCHPO</name>
<reference key="1">
    <citation type="submission" date="1996-03" db="EMBL/GenBank/DDBJ databases">
        <title>S.pombe chromosome II cosmid 1228 sequence.</title>
        <authorList>
            <person name="Kohnosu A."/>
            <person name="Niwa O."/>
            <person name="Yano M."/>
            <person name="Saitoh S."/>
            <person name="Katayama T."/>
            <person name="Nagao K."/>
            <person name="Yanagida M."/>
        </authorList>
    </citation>
    <scope>NUCLEOTIDE SEQUENCE [GENOMIC DNA]</scope>
    <source>
        <strain>972 / ATCC 24843</strain>
    </source>
</reference>
<reference key="2">
    <citation type="journal article" date="2002" name="Nature">
        <title>The genome sequence of Schizosaccharomyces pombe.</title>
        <authorList>
            <person name="Wood V."/>
            <person name="Gwilliam R."/>
            <person name="Rajandream M.A."/>
            <person name="Lyne M.H."/>
            <person name="Lyne R."/>
            <person name="Stewart A."/>
            <person name="Sgouros J.G."/>
            <person name="Peat N."/>
            <person name="Hayles J."/>
            <person name="Baker S.G."/>
            <person name="Basham D."/>
            <person name="Bowman S."/>
            <person name="Brooks K."/>
            <person name="Brown D."/>
            <person name="Brown S."/>
            <person name="Chillingworth T."/>
            <person name="Churcher C.M."/>
            <person name="Collins M."/>
            <person name="Connor R."/>
            <person name="Cronin A."/>
            <person name="Davis P."/>
            <person name="Feltwell T."/>
            <person name="Fraser A."/>
            <person name="Gentles S."/>
            <person name="Goble A."/>
            <person name="Hamlin N."/>
            <person name="Harris D.E."/>
            <person name="Hidalgo J."/>
            <person name="Hodgson G."/>
            <person name="Holroyd S."/>
            <person name="Hornsby T."/>
            <person name="Howarth S."/>
            <person name="Huckle E.J."/>
            <person name="Hunt S."/>
            <person name="Jagels K."/>
            <person name="James K.D."/>
            <person name="Jones L."/>
            <person name="Jones M."/>
            <person name="Leather S."/>
            <person name="McDonald S."/>
            <person name="McLean J."/>
            <person name="Mooney P."/>
            <person name="Moule S."/>
            <person name="Mungall K.L."/>
            <person name="Murphy L.D."/>
            <person name="Niblett D."/>
            <person name="Odell C."/>
            <person name="Oliver K."/>
            <person name="O'Neil S."/>
            <person name="Pearson D."/>
            <person name="Quail M.A."/>
            <person name="Rabbinowitsch E."/>
            <person name="Rutherford K.M."/>
            <person name="Rutter S."/>
            <person name="Saunders D."/>
            <person name="Seeger K."/>
            <person name="Sharp S."/>
            <person name="Skelton J."/>
            <person name="Simmonds M.N."/>
            <person name="Squares R."/>
            <person name="Squares S."/>
            <person name="Stevens K."/>
            <person name="Taylor K."/>
            <person name="Taylor R.G."/>
            <person name="Tivey A."/>
            <person name="Walsh S.V."/>
            <person name="Warren T."/>
            <person name="Whitehead S."/>
            <person name="Woodward J.R."/>
            <person name="Volckaert G."/>
            <person name="Aert R."/>
            <person name="Robben J."/>
            <person name="Grymonprez B."/>
            <person name="Weltjens I."/>
            <person name="Vanstreels E."/>
            <person name="Rieger M."/>
            <person name="Schaefer M."/>
            <person name="Mueller-Auer S."/>
            <person name="Gabel C."/>
            <person name="Fuchs M."/>
            <person name="Duesterhoeft A."/>
            <person name="Fritzc C."/>
            <person name="Holzer E."/>
            <person name="Moestl D."/>
            <person name="Hilbert H."/>
            <person name="Borzym K."/>
            <person name="Langer I."/>
            <person name="Beck A."/>
            <person name="Lehrach H."/>
            <person name="Reinhardt R."/>
            <person name="Pohl T.M."/>
            <person name="Eger P."/>
            <person name="Zimmermann W."/>
            <person name="Wedler H."/>
            <person name="Wambutt R."/>
            <person name="Purnelle B."/>
            <person name="Goffeau A."/>
            <person name="Cadieu E."/>
            <person name="Dreano S."/>
            <person name="Gloux S."/>
            <person name="Lelaure V."/>
            <person name="Mottier S."/>
            <person name="Galibert F."/>
            <person name="Aves S.J."/>
            <person name="Xiang Z."/>
            <person name="Hunt C."/>
            <person name="Moore K."/>
            <person name="Hurst S.M."/>
            <person name="Lucas M."/>
            <person name="Rochet M."/>
            <person name="Gaillardin C."/>
            <person name="Tallada V.A."/>
            <person name="Garzon A."/>
            <person name="Thode G."/>
            <person name="Daga R.R."/>
            <person name="Cruzado L."/>
            <person name="Jimenez J."/>
            <person name="Sanchez M."/>
            <person name="del Rey F."/>
            <person name="Benito J."/>
            <person name="Dominguez A."/>
            <person name="Revuelta J.L."/>
            <person name="Moreno S."/>
            <person name="Armstrong J."/>
            <person name="Forsburg S.L."/>
            <person name="Cerutti L."/>
            <person name="Lowe T."/>
            <person name="McCombie W.R."/>
            <person name="Paulsen I."/>
            <person name="Potashkin J."/>
            <person name="Shpakovski G.V."/>
            <person name="Ussery D."/>
            <person name="Barrell B.G."/>
            <person name="Nurse P."/>
        </authorList>
    </citation>
    <scope>NUCLEOTIDE SEQUENCE [LARGE SCALE GENOMIC DNA]</scope>
    <source>
        <strain>972 / ATCC 24843</strain>
    </source>
</reference>
<reference key="3">
    <citation type="journal article" date="1997" name="DNA Res.">
        <title>Identification of open reading frames in Schizosaccharomyces pombe cDNAs.</title>
        <authorList>
            <person name="Yoshioka S."/>
            <person name="Kato K."/>
            <person name="Nakai K."/>
            <person name="Okayama H."/>
            <person name="Nojima H."/>
        </authorList>
    </citation>
    <scope>NUCLEOTIDE SEQUENCE [LARGE SCALE MRNA] OF 4-292</scope>
    <source>
        <strain>PR745</strain>
    </source>
</reference>
<reference key="4">
    <citation type="journal article" date="2004" name="Yeast">
        <title>Identification of genes encoding putative nucleoporins and transport factors in the fission yeast Schizosaccharomyces pombe: a deletion analysis.</title>
        <authorList>
            <person name="Chen X.Q."/>
            <person name="Du X."/>
            <person name="Liu J."/>
            <person name="Balasubramanian M.K."/>
            <person name="Balasundaram D."/>
        </authorList>
    </citation>
    <scope>FUNCTION</scope>
    <scope>SUBCELLULAR LOCATION</scope>
</reference>
<reference key="5">
    <citation type="journal article" date="2006" name="Nat. Biotechnol.">
        <title>ORFeome cloning and global analysis of protein localization in the fission yeast Schizosaccharomyces pombe.</title>
        <authorList>
            <person name="Matsuyama A."/>
            <person name="Arai R."/>
            <person name="Yashiroda Y."/>
            <person name="Shirai A."/>
            <person name="Kamata A."/>
            <person name="Sekido S."/>
            <person name="Kobayashi Y."/>
            <person name="Hashimoto A."/>
            <person name="Hamamoto M."/>
            <person name="Hiraoka Y."/>
            <person name="Horinouchi S."/>
            <person name="Yoshida M."/>
        </authorList>
    </citation>
    <scope>SUBCELLULAR LOCATION [LARGE SCALE ANALYSIS]</scope>
</reference>
<dbReference type="EMBL" id="D83992">
    <property type="protein sequence ID" value="BAA12184.1"/>
    <property type="molecule type" value="Genomic_DNA"/>
</dbReference>
<dbReference type="EMBL" id="CU329671">
    <property type="protein sequence ID" value="CAB57931.1"/>
    <property type="molecule type" value="Genomic_DNA"/>
</dbReference>
<dbReference type="EMBL" id="D89195">
    <property type="protein sequence ID" value="BAA13856.1"/>
    <property type="molecule type" value="mRNA"/>
</dbReference>
<dbReference type="PIR" id="T40045">
    <property type="entry name" value="T40045"/>
</dbReference>
<dbReference type="PIR" id="T42994">
    <property type="entry name" value="T42994"/>
</dbReference>
<dbReference type="RefSeq" id="NP_595663.1">
    <property type="nucleotide sequence ID" value="NM_001021558.2"/>
</dbReference>
<dbReference type="SMR" id="Q9USV4"/>
<dbReference type="BioGRID" id="276928">
    <property type="interactions" value="7"/>
</dbReference>
<dbReference type="FunCoup" id="Q9USV4">
    <property type="interactions" value="1207"/>
</dbReference>
<dbReference type="STRING" id="284812.Q9USV4"/>
<dbReference type="iPTMnet" id="Q9USV4"/>
<dbReference type="SwissPalm" id="Q9USV4"/>
<dbReference type="PaxDb" id="4896-SPBC28F2.02.1"/>
<dbReference type="EnsemblFungi" id="SPBC28F2.02.1">
    <property type="protein sequence ID" value="SPBC28F2.02.1:pep"/>
    <property type="gene ID" value="SPBC28F2.02"/>
</dbReference>
<dbReference type="GeneID" id="2540400"/>
<dbReference type="KEGG" id="spo:2540400"/>
<dbReference type="PomBase" id="SPBC28F2.02">
    <property type="gene designation" value="mep33"/>
</dbReference>
<dbReference type="VEuPathDB" id="FungiDB:SPBC28F2.02"/>
<dbReference type="eggNOG" id="KOG1763">
    <property type="taxonomic scope" value="Eukaryota"/>
</dbReference>
<dbReference type="HOGENOM" id="CLU_042870_1_0_1"/>
<dbReference type="InParanoid" id="Q9USV4"/>
<dbReference type="OMA" id="AMIFKPV"/>
<dbReference type="PhylomeDB" id="Q9USV4"/>
<dbReference type="PRO" id="PR:Q9USV4"/>
<dbReference type="Proteomes" id="UP000002485">
    <property type="component" value="Chromosome II"/>
</dbReference>
<dbReference type="GO" id="GO:0005737">
    <property type="term" value="C:cytoplasm"/>
    <property type="evidence" value="ECO:0000314"/>
    <property type="project" value="PomBase"/>
</dbReference>
<dbReference type="GO" id="GO:0005829">
    <property type="term" value="C:cytosol"/>
    <property type="evidence" value="ECO:0007005"/>
    <property type="project" value="PomBase"/>
</dbReference>
<dbReference type="GO" id="GO:0008270">
    <property type="term" value="F:zinc ion binding"/>
    <property type="evidence" value="ECO:0007669"/>
    <property type="project" value="UniProtKB-KW"/>
</dbReference>
<dbReference type="GO" id="GO:0002181">
    <property type="term" value="P:cytoplasmic translation"/>
    <property type="evidence" value="ECO:0000318"/>
    <property type="project" value="GO_Central"/>
</dbReference>
<dbReference type="GO" id="GO:0016973">
    <property type="term" value="P:poly(A)+ mRNA export from nucleus"/>
    <property type="evidence" value="ECO:0000315"/>
    <property type="project" value="PomBase"/>
</dbReference>
<dbReference type="Gene3D" id="6.20.400.10">
    <property type="match status" value="1"/>
</dbReference>
<dbReference type="InterPro" id="IPR032378">
    <property type="entry name" value="ZC3H15/TMA46_C"/>
</dbReference>
<dbReference type="InterPro" id="IPR000571">
    <property type="entry name" value="Znf_CCCH"/>
</dbReference>
<dbReference type="PANTHER" id="PTHR12681:SF0">
    <property type="entry name" value="ZINC FINGER CCCH DOMAIN-CONTAINING PROTEIN 15"/>
    <property type="match status" value="1"/>
</dbReference>
<dbReference type="PANTHER" id="PTHR12681">
    <property type="entry name" value="ZINC FINGER-CONTAINING PROTEIN P48ZNF"/>
    <property type="match status" value="1"/>
</dbReference>
<dbReference type="Pfam" id="PF16543">
    <property type="entry name" value="DFRP_C"/>
    <property type="match status" value="1"/>
</dbReference>
<dbReference type="PROSITE" id="PS50103">
    <property type="entry name" value="ZF_C3H1"/>
    <property type="match status" value="1"/>
</dbReference>
<keyword id="KW-0963">Cytoplasm</keyword>
<keyword id="KW-0479">Metal-binding</keyword>
<keyword id="KW-0509">mRNA transport</keyword>
<keyword id="KW-1185">Reference proteome</keyword>
<keyword id="KW-0813">Transport</keyword>
<keyword id="KW-0862">Zinc</keyword>
<keyword id="KW-0863">Zinc-finger</keyword>
<accession>Q9USV4</accession>
<accession>P78845</accession>
<accession>P78935</accession>
<organism>
    <name type="scientific">Schizosaccharomyces pombe (strain 972 / ATCC 24843)</name>
    <name type="common">Fission yeast</name>
    <dbReference type="NCBI Taxonomy" id="284812"/>
    <lineage>
        <taxon>Eukaryota</taxon>
        <taxon>Fungi</taxon>
        <taxon>Dikarya</taxon>
        <taxon>Ascomycota</taxon>
        <taxon>Taphrinomycotina</taxon>
        <taxon>Schizosaccharomycetes</taxon>
        <taxon>Schizosaccharomycetales</taxon>
        <taxon>Schizosaccharomycetaceae</taxon>
        <taxon>Schizosaccharomyces</taxon>
    </lineage>
</organism>
<protein>
    <recommendedName>
        <fullName>mRNA export protein 33</fullName>
    </recommendedName>
</protein>
<evidence type="ECO:0000255" key="1">
    <source>
        <dbReference type="PROSITE-ProRule" id="PRU00723"/>
    </source>
</evidence>
<evidence type="ECO:0000256" key="2">
    <source>
        <dbReference type="SAM" id="MobiDB-lite"/>
    </source>
</evidence>
<evidence type="ECO:0000269" key="3">
    <source>
    </source>
</evidence>
<evidence type="ECO:0000269" key="4">
    <source>
    </source>
</evidence>
<evidence type="ECO:0000305" key="5"/>
<gene>
    <name type="primary">mep33</name>
    <name type="ORF">SPBC28F2.02</name>
</gene>
<sequence length="292" mass="33282">MPPKKAAKGKGDPGKAAKKDPTKKAADATFGLKNKNRSTKVQAKIRQIEQNAAASGSKDAKRQEALRKRREEEKRAAEAAKAEVAALFNAIPKKQTPQNFLTRKEEVKESQKIDLYSDVRDQQTDLPLEKRPWINTDIVCKFFLEACETGKYGWLWQCPNGNMTCIYKHALPYGYVLSRDKKKDDTKEEISLEAFIEIERHRLGPNLTPVTEENFKKWSDGRRDRILKQAEERRSNRAVGRSNLSGREYFESNKDKTHEVVGDEEDWDFSALRRETEALAKAQDATAPIVSV</sequence>
<comment type="function">
    <text evidence="3">Functions as a component of the nuclear pore complex (NPC). NPC components, collectively referred to as nucleoporins (NUPs), can play the role of both NPC structural components and of docking or interaction partners for transiently associated nuclear transport factors. Active directional transport is assured by both, a Phe-Gly (FG) repeat affinity gradient for these transport factors across the NPC and a transport cofactor concentration gradient across the nuclear envelope. Involved in the export of mRNA from the nucleus to the cytoplasm. May play a role in mitotic spindle formation and/or function.</text>
</comment>
<comment type="subcellular location">
    <subcellularLocation>
        <location evidence="3 4">Cytoplasm</location>
    </subcellularLocation>
</comment>
<feature type="chain" id="PRO_0000116773" description="mRNA export protein 33">
    <location>
        <begin position="1"/>
        <end position="292"/>
    </location>
</feature>
<feature type="zinc finger region" description="C3H1-type" evidence="1">
    <location>
        <begin position="134"/>
        <end position="172"/>
    </location>
</feature>
<feature type="region of interest" description="Disordered" evidence="2">
    <location>
        <begin position="1"/>
        <end position="76"/>
    </location>
</feature>
<feature type="compositionally biased region" description="Basic and acidic residues" evidence="2">
    <location>
        <begin position="9"/>
        <end position="26"/>
    </location>
</feature>
<feature type="compositionally biased region" description="Basic and acidic residues" evidence="2">
    <location>
        <begin position="58"/>
        <end position="76"/>
    </location>
</feature>
<feature type="sequence conflict" description="In Ref. 1; BAA12184." evidence="5" ref="1">
    <original>QK</original>
    <variation>PQ</variation>
    <location>
        <begin position="111"/>
        <end position="112"/>
    </location>
</feature>